<accession>P82338</accession>
<evidence type="ECO:0000269" key="1">
    <source>
    </source>
</evidence>
<evidence type="ECO:0000303" key="2">
    <source>
    </source>
</evidence>
<evidence type="ECO:0000305" key="3"/>
<protein>
    <recommendedName>
        <fullName>Unknown protein from spots 23/28/205 of 2D-PAGE of thylakoid</fullName>
    </recommendedName>
</protein>
<proteinExistence type="evidence at protein level"/>
<name>UT023_PEA</name>
<feature type="chain" id="PRO_0000234465" description="Unknown protein from spots 23/28/205 of 2D-PAGE of thylakoid">
    <location>
        <begin position="1"/>
        <end position="45" status="greater than"/>
    </location>
</feature>
<feature type="unsure residue" description="E or Y" evidence="1">
    <location>
        <position position="11"/>
    </location>
</feature>
<feature type="unsure residue" description="L or I" evidence="1">
    <location>
        <position position="19"/>
    </location>
</feature>
<feature type="unsure residue" description="I or L" evidence="1">
    <location>
        <position position="29"/>
    </location>
</feature>
<feature type="unsure residue" description="L or I" evidence="1">
    <location>
        <position position="30"/>
    </location>
</feature>
<feature type="unsure residue" description="L or I" evidence="1">
    <location>
        <position position="36"/>
    </location>
</feature>
<feature type="non-consecutive residues" evidence="2">
    <location>
        <begin position="13"/>
        <end position="14"/>
    </location>
</feature>
<feature type="non-consecutive residues" evidence="2">
    <location>
        <begin position="22"/>
        <end position="23"/>
    </location>
</feature>
<feature type="non-consecutive residues" evidence="2">
    <location>
        <begin position="35"/>
        <end position="36"/>
    </location>
</feature>
<feature type="non-terminal residue" evidence="2">
    <location>
        <position position="45"/>
    </location>
</feature>
<keyword id="KW-0150">Chloroplast</keyword>
<keyword id="KW-0903">Direct protein sequencing</keyword>
<keyword id="KW-0934">Plastid</keyword>
<keyword id="KW-0793">Thylakoid</keyword>
<comment type="subcellular location">
    <subcellularLocation>
        <location evidence="1">Plastid</location>
        <location evidence="1">Chloroplast thylakoid</location>
    </subcellularLocation>
</comment>
<comment type="miscellaneous">
    <text evidence="1">On the 2D-gel the determined pI of this protein is: 5.3-6.3, its MW is: 27.1-28.5 kDa.</text>
</comment>
<reference evidence="3" key="1">
    <citation type="journal article" date="2000" name="Plant Cell">
        <title>Proteomics of the chloroplast: systematic identification and targeting analysis of lumenal and peripheral thylakoid proteins.</title>
        <authorList>
            <person name="Peltier J.-B."/>
            <person name="Friso G."/>
            <person name="Kalume D.E."/>
            <person name="Roepstorff P."/>
            <person name="Nilsson F."/>
            <person name="Adamska I."/>
            <person name="van Wijk K.J."/>
        </authorList>
    </citation>
    <scope>PROTEIN SEQUENCE</scope>
    <scope>SUBCELLULAR LOCATION</scope>
    <source>
        <strain evidence="1">cv. De Grace</strain>
        <tissue evidence="1">Leaf</tissue>
    </source>
</reference>
<sequence>ADLIERRQRSEFQFSAVGLGPRTDYEVDILTTFTKLNYEAYTYPR</sequence>
<dbReference type="GO" id="GO:0009534">
    <property type="term" value="C:chloroplast thylakoid"/>
    <property type="evidence" value="ECO:0007669"/>
    <property type="project" value="UniProtKB-SubCell"/>
</dbReference>
<organism>
    <name type="scientific">Pisum sativum</name>
    <name type="common">Garden pea</name>
    <name type="synonym">Lathyrus oleraceus</name>
    <dbReference type="NCBI Taxonomy" id="3888"/>
    <lineage>
        <taxon>Eukaryota</taxon>
        <taxon>Viridiplantae</taxon>
        <taxon>Streptophyta</taxon>
        <taxon>Embryophyta</taxon>
        <taxon>Tracheophyta</taxon>
        <taxon>Spermatophyta</taxon>
        <taxon>Magnoliopsida</taxon>
        <taxon>eudicotyledons</taxon>
        <taxon>Gunneridae</taxon>
        <taxon>Pentapetalae</taxon>
        <taxon>rosids</taxon>
        <taxon>fabids</taxon>
        <taxon>Fabales</taxon>
        <taxon>Fabaceae</taxon>
        <taxon>Papilionoideae</taxon>
        <taxon>50 kb inversion clade</taxon>
        <taxon>NPAAA clade</taxon>
        <taxon>Hologalegina</taxon>
        <taxon>IRL clade</taxon>
        <taxon>Fabeae</taxon>
        <taxon>Pisum</taxon>
    </lineage>
</organism>